<feature type="chain" id="PRO_0000206573" description="Dynamin-3">
    <location>
        <begin position="1"/>
        <end position="869"/>
    </location>
</feature>
<feature type="domain" description="Dynamin-type G" evidence="8">
    <location>
        <begin position="28"/>
        <end position="294"/>
    </location>
</feature>
<feature type="domain" description="PH" evidence="6">
    <location>
        <begin position="515"/>
        <end position="621"/>
    </location>
</feature>
<feature type="domain" description="GED" evidence="7">
    <location>
        <begin position="659"/>
        <end position="750"/>
    </location>
</feature>
<feature type="region of interest" description="G1 motif" evidence="8">
    <location>
        <begin position="38"/>
        <end position="45"/>
    </location>
</feature>
<feature type="region of interest" description="G2 motif" evidence="8">
    <location>
        <begin position="64"/>
        <end position="66"/>
    </location>
</feature>
<feature type="region of interest" description="G3 motif" evidence="8">
    <location>
        <begin position="136"/>
        <end position="139"/>
    </location>
</feature>
<feature type="region of interest" description="G4 motif" evidence="8">
    <location>
        <begin position="205"/>
        <end position="208"/>
    </location>
</feature>
<feature type="region of interest" description="G5 motif" evidence="8">
    <location>
        <begin position="235"/>
        <end position="238"/>
    </location>
</feature>
<feature type="region of interest" description="Disordered" evidence="9">
    <location>
        <begin position="747"/>
        <end position="869"/>
    </location>
</feature>
<feature type="compositionally biased region" description="Pro residues" evidence="9">
    <location>
        <begin position="797"/>
        <end position="822"/>
    </location>
</feature>
<feature type="compositionally biased region" description="Pro residues" evidence="9">
    <location>
        <begin position="832"/>
        <end position="855"/>
    </location>
</feature>
<feature type="binding site" evidence="14">
    <location>
        <begin position="38"/>
        <end position="46"/>
    </location>
    <ligand>
        <name>GTP</name>
        <dbReference type="ChEBI" id="CHEBI:37565"/>
    </ligand>
</feature>
<feature type="binding site" evidence="14">
    <location>
        <begin position="205"/>
        <end position="211"/>
    </location>
    <ligand>
        <name>GTP</name>
        <dbReference type="ChEBI" id="CHEBI:37565"/>
    </ligand>
</feature>
<feature type="binding site" evidence="14">
    <location>
        <begin position="236"/>
        <end position="239"/>
    </location>
    <ligand>
        <name>GTP</name>
        <dbReference type="ChEBI" id="CHEBI:37565"/>
    </ligand>
</feature>
<feature type="modified residue" description="Phosphotyrosine" evidence="2">
    <location>
        <position position="231"/>
    </location>
</feature>
<feature type="modified residue" description="N6-acetyllysine" evidence="3">
    <location>
        <position position="299"/>
    </location>
</feature>
<feature type="modified residue" description="Phosphotyrosine" evidence="2">
    <location>
        <position position="603"/>
    </location>
</feature>
<feature type="modified residue" description="N6-acetyllysine" evidence="4">
    <location>
        <position position="604"/>
    </location>
</feature>
<feature type="modified residue" description="Phosphoserine" evidence="5">
    <location>
        <position position="769"/>
    </location>
</feature>
<feature type="modified residue" description="Phosphoserine" evidence="2">
    <location>
        <position position="773"/>
    </location>
</feature>
<feature type="modified residue" description="Phosphoserine" evidence="5">
    <location>
        <position position="853"/>
    </location>
</feature>
<feature type="splice variant" id="VSP_034053" description="In isoform 2, isoform 3 and isoform 5." evidence="10 11 12">
    <location>
        <begin position="516"/>
        <end position="525"/>
    </location>
</feature>
<feature type="splice variant" id="VSP_054546" description="In isoform 5." evidence="12">
    <original>EK</original>
    <variation>NI</variation>
    <location>
        <begin position="564"/>
        <end position="565"/>
    </location>
</feature>
<feature type="splice variant" id="VSP_054547" description="In isoform 5." evidence="12">
    <location>
        <begin position="566"/>
        <end position="869"/>
    </location>
</feature>
<feature type="splice variant" id="VSP_034054" description="In isoform 3 and isoform 4." evidence="11">
    <original>V</original>
    <variation>VGNNK</variation>
    <location>
        <position position="637"/>
    </location>
</feature>
<feature type="sequence conflict" description="In Ref. 3; CAB66647." evidence="13" ref="3">
    <original>T</original>
    <variation>S</variation>
    <location>
        <position position="323"/>
    </location>
</feature>
<feature type="sequence conflict" description="In Ref. 3; CAB66647." evidence="13" ref="3">
    <original>I</original>
    <variation>T</variation>
    <location>
        <position position="412"/>
    </location>
</feature>
<feature type="sequence conflict" description="In Ref. 3; CAB66647." evidence="13" ref="3">
    <original>S</original>
    <variation>R</variation>
    <location>
        <position position="844"/>
    </location>
</feature>
<feature type="strand" evidence="16">
    <location>
        <begin position="34"/>
        <end position="37"/>
    </location>
</feature>
<feature type="helix" evidence="16">
    <location>
        <begin position="44"/>
        <end position="52"/>
    </location>
</feature>
<feature type="strand" evidence="16">
    <location>
        <begin position="69"/>
        <end position="75"/>
    </location>
</feature>
<feature type="strand" evidence="16">
    <location>
        <begin position="80"/>
        <end position="86"/>
    </location>
</feature>
<feature type="helix" evidence="16">
    <location>
        <begin position="94"/>
        <end position="105"/>
    </location>
</feature>
<feature type="strand" evidence="16">
    <location>
        <begin position="120"/>
        <end position="126"/>
    </location>
</feature>
<feature type="strand" evidence="16">
    <location>
        <begin position="131"/>
        <end position="136"/>
    </location>
</feature>
<feature type="helix" evidence="16">
    <location>
        <begin position="152"/>
        <end position="164"/>
    </location>
</feature>
<feature type="strand" evidence="16">
    <location>
        <begin position="170"/>
        <end position="176"/>
    </location>
</feature>
<feature type="helix" evidence="16">
    <location>
        <begin position="181"/>
        <end position="183"/>
    </location>
</feature>
<feature type="helix" evidence="16">
    <location>
        <begin position="185"/>
        <end position="193"/>
    </location>
</feature>
<feature type="strand" evidence="16">
    <location>
        <begin position="200"/>
        <end position="205"/>
    </location>
</feature>
<feature type="helix" evidence="16">
    <location>
        <begin position="207"/>
        <end position="209"/>
    </location>
</feature>
<feature type="helix" evidence="16">
    <location>
        <begin position="217"/>
        <end position="220"/>
    </location>
</feature>
<feature type="strand" evidence="16">
    <location>
        <begin position="231"/>
        <end position="233"/>
    </location>
</feature>
<feature type="helix" evidence="16">
    <location>
        <begin position="239"/>
        <end position="243"/>
    </location>
</feature>
<feature type="helix" evidence="16">
    <location>
        <begin position="248"/>
        <end position="261"/>
    </location>
</feature>
<feature type="turn" evidence="16">
    <location>
        <begin position="263"/>
        <end position="265"/>
    </location>
</feature>
<feature type="helix" evidence="16">
    <location>
        <begin position="266"/>
        <end position="271"/>
    </location>
</feature>
<feature type="helix" evidence="16">
    <location>
        <begin position="274"/>
        <end position="285"/>
    </location>
</feature>
<reference key="1">
    <citation type="journal article" date="1998" name="DNA Res.">
        <title>Prediction of the coding sequences of unidentified human genes. XII. The complete sequences of 100 new cDNA clones from brain which code for large proteins in vitro.</title>
        <authorList>
            <person name="Nagase T."/>
            <person name="Ishikawa K."/>
            <person name="Suyama M."/>
            <person name="Kikuno R."/>
            <person name="Hirosawa M."/>
            <person name="Miyajima N."/>
            <person name="Tanaka A."/>
            <person name="Kotani H."/>
            <person name="Nomura N."/>
            <person name="Ohara O."/>
        </authorList>
    </citation>
    <scope>NUCLEOTIDE SEQUENCE [LARGE SCALE MRNA] (ISOFORM 2)</scope>
    <source>
        <tissue>Brain</tissue>
    </source>
</reference>
<reference key="2">
    <citation type="journal article" date="2002" name="DNA Res.">
        <title>Construction of expression-ready cDNA clones for KIAA genes: manual curation of 330 KIAA cDNA clones.</title>
        <authorList>
            <person name="Nakajima D."/>
            <person name="Okazaki N."/>
            <person name="Yamakawa H."/>
            <person name="Kikuno R."/>
            <person name="Ohara O."/>
            <person name="Nagase T."/>
        </authorList>
    </citation>
    <scope>SEQUENCE REVISION</scope>
</reference>
<reference key="3">
    <citation type="journal article" date="2001" name="Genome Res.">
        <title>Towards a catalog of human genes and proteins: sequencing and analysis of 500 novel complete protein coding human cDNAs.</title>
        <authorList>
            <person name="Wiemann S."/>
            <person name="Weil B."/>
            <person name="Wellenreuther R."/>
            <person name="Gassenhuber J."/>
            <person name="Glassl S."/>
            <person name="Ansorge W."/>
            <person name="Boecher M."/>
            <person name="Bloecker H."/>
            <person name="Bauersachs S."/>
            <person name="Blum H."/>
            <person name="Lauber J."/>
            <person name="Duesterhoeft A."/>
            <person name="Beyer A."/>
            <person name="Koehrer K."/>
            <person name="Strack N."/>
            <person name="Mewes H.-W."/>
            <person name="Ottenwaelder B."/>
            <person name="Obermaier B."/>
            <person name="Tampe J."/>
            <person name="Heubner D."/>
            <person name="Wambutt R."/>
            <person name="Korn B."/>
            <person name="Klein M."/>
            <person name="Poustka A."/>
        </authorList>
    </citation>
    <scope>NUCLEOTIDE SEQUENCE [LARGE SCALE MRNA] (ISOFORM 3)</scope>
    <source>
        <tissue>Kidney</tissue>
    </source>
</reference>
<reference key="4">
    <citation type="journal article" date="2006" name="Nature">
        <title>The DNA sequence and biological annotation of human chromosome 1.</title>
        <authorList>
            <person name="Gregory S.G."/>
            <person name="Barlow K.F."/>
            <person name="McLay K.E."/>
            <person name="Kaul R."/>
            <person name="Swarbreck D."/>
            <person name="Dunham A."/>
            <person name="Scott C.E."/>
            <person name="Howe K.L."/>
            <person name="Woodfine K."/>
            <person name="Spencer C.C.A."/>
            <person name="Jones M.C."/>
            <person name="Gillson C."/>
            <person name="Searle S."/>
            <person name="Zhou Y."/>
            <person name="Kokocinski F."/>
            <person name="McDonald L."/>
            <person name="Evans R."/>
            <person name="Phillips K."/>
            <person name="Atkinson A."/>
            <person name="Cooper R."/>
            <person name="Jones C."/>
            <person name="Hall R.E."/>
            <person name="Andrews T.D."/>
            <person name="Lloyd C."/>
            <person name="Ainscough R."/>
            <person name="Almeida J.P."/>
            <person name="Ambrose K.D."/>
            <person name="Anderson F."/>
            <person name="Andrew R.W."/>
            <person name="Ashwell R.I.S."/>
            <person name="Aubin K."/>
            <person name="Babbage A.K."/>
            <person name="Bagguley C.L."/>
            <person name="Bailey J."/>
            <person name="Beasley H."/>
            <person name="Bethel G."/>
            <person name="Bird C.P."/>
            <person name="Bray-Allen S."/>
            <person name="Brown J.Y."/>
            <person name="Brown A.J."/>
            <person name="Buckley D."/>
            <person name="Burton J."/>
            <person name="Bye J."/>
            <person name="Carder C."/>
            <person name="Chapman J.C."/>
            <person name="Clark S.Y."/>
            <person name="Clarke G."/>
            <person name="Clee C."/>
            <person name="Cobley V."/>
            <person name="Collier R.E."/>
            <person name="Corby N."/>
            <person name="Coville G.J."/>
            <person name="Davies J."/>
            <person name="Deadman R."/>
            <person name="Dunn M."/>
            <person name="Earthrowl M."/>
            <person name="Ellington A.G."/>
            <person name="Errington H."/>
            <person name="Frankish A."/>
            <person name="Frankland J."/>
            <person name="French L."/>
            <person name="Garner P."/>
            <person name="Garnett J."/>
            <person name="Gay L."/>
            <person name="Ghori M.R.J."/>
            <person name="Gibson R."/>
            <person name="Gilby L.M."/>
            <person name="Gillett W."/>
            <person name="Glithero R.J."/>
            <person name="Grafham D.V."/>
            <person name="Griffiths C."/>
            <person name="Griffiths-Jones S."/>
            <person name="Grocock R."/>
            <person name="Hammond S."/>
            <person name="Harrison E.S.I."/>
            <person name="Hart E."/>
            <person name="Haugen E."/>
            <person name="Heath P.D."/>
            <person name="Holmes S."/>
            <person name="Holt K."/>
            <person name="Howden P.J."/>
            <person name="Hunt A.R."/>
            <person name="Hunt S.E."/>
            <person name="Hunter G."/>
            <person name="Isherwood J."/>
            <person name="James R."/>
            <person name="Johnson C."/>
            <person name="Johnson D."/>
            <person name="Joy A."/>
            <person name="Kay M."/>
            <person name="Kershaw J.K."/>
            <person name="Kibukawa M."/>
            <person name="Kimberley A.M."/>
            <person name="King A."/>
            <person name="Knights A.J."/>
            <person name="Lad H."/>
            <person name="Laird G."/>
            <person name="Lawlor S."/>
            <person name="Leongamornlert D.A."/>
            <person name="Lloyd D.M."/>
            <person name="Loveland J."/>
            <person name="Lovell J."/>
            <person name="Lush M.J."/>
            <person name="Lyne R."/>
            <person name="Martin S."/>
            <person name="Mashreghi-Mohammadi M."/>
            <person name="Matthews L."/>
            <person name="Matthews N.S.W."/>
            <person name="McLaren S."/>
            <person name="Milne S."/>
            <person name="Mistry S."/>
            <person name="Moore M.J.F."/>
            <person name="Nickerson T."/>
            <person name="O'Dell C.N."/>
            <person name="Oliver K."/>
            <person name="Palmeiri A."/>
            <person name="Palmer S.A."/>
            <person name="Parker A."/>
            <person name="Patel D."/>
            <person name="Pearce A.V."/>
            <person name="Peck A.I."/>
            <person name="Pelan S."/>
            <person name="Phelps K."/>
            <person name="Phillimore B.J."/>
            <person name="Plumb R."/>
            <person name="Rajan J."/>
            <person name="Raymond C."/>
            <person name="Rouse G."/>
            <person name="Saenphimmachak C."/>
            <person name="Sehra H.K."/>
            <person name="Sheridan E."/>
            <person name="Shownkeen R."/>
            <person name="Sims S."/>
            <person name="Skuce C.D."/>
            <person name="Smith M."/>
            <person name="Steward C."/>
            <person name="Subramanian S."/>
            <person name="Sycamore N."/>
            <person name="Tracey A."/>
            <person name="Tromans A."/>
            <person name="Van Helmond Z."/>
            <person name="Wall M."/>
            <person name="Wallis J.M."/>
            <person name="White S."/>
            <person name="Whitehead S.L."/>
            <person name="Wilkinson J.E."/>
            <person name="Willey D.L."/>
            <person name="Williams H."/>
            <person name="Wilming L."/>
            <person name="Wray P.W."/>
            <person name="Wu Z."/>
            <person name="Coulson A."/>
            <person name="Vaudin M."/>
            <person name="Sulston J.E."/>
            <person name="Durbin R.M."/>
            <person name="Hubbard T."/>
            <person name="Wooster R."/>
            <person name="Dunham I."/>
            <person name="Carter N.P."/>
            <person name="McVean G."/>
            <person name="Ross M.T."/>
            <person name="Harrow J."/>
            <person name="Olson M.V."/>
            <person name="Beck S."/>
            <person name="Rogers J."/>
            <person name="Bentley D.R."/>
        </authorList>
    </citation>
    <scope>NUCLEOTIDE SEQUENCE [LARGE SCALE GENOMIC DNA]</scope>
</reference>
<reference key="5">
    <citation type="submission" date="2005-07" db="EMBL/GenBank/DDBJ databases">
        <authorList>
            <person name="Mural R.J."/>
            <person name="Istrail S."/>
            <person name="Sutton G."/>
            <person name="Florea L."/>
            <person name="Halpern A.L."/>
            <person name="Mobarry C.M."/>
            <person name="Lippert R."/>
            <person name="Walenz B."/>
            <person name="Shatkay H."/>
            <person name="Dew I."/>
            <person name="Miller J.R."/>
            <person name="Flanigan M.J."/>
            <person name="Edwards N.J."/>
            <person name="Bolanos R."/>
            <person name="Fasulo D."/>
            <person name="Halldorsson B.V."/>
            <person name="Hannenhalli S."/>
            <person name="Turner R."/>
            <person name="Yooseph S."/>
            <person name="Lu F."/>
            <person name="Nusskern D.R."/>
            <person name="Shue B.C."/>
            <person name="Zheng X.H."/>
            <person name="Zhong F."/>
            <person name="Delcher A.L."/>
            <person name="Huson D.H."/>
            <person name="Kravitz S.A."/>
            <person name="Mouchard L."/>
            <person name="Reinert K."/>
            <person name="Remington K.A."/>
            <person name="Clark A.G."/>
            <person name="Waterman M.S."/>
            <person name="Eichler E.E."/>
            <person name="Adams M.D."/>
            <person name="Hunkapiller M.W."/>
            <person name="Myers E.W."/>
            <person name="Venter J.C."/>
        </authorList>
    </citation>
    <scope>NUCLEOTIDE SEQUENCE [LARGE SCALE GENOMIC DNA]</scope>
</reference>
<reference key="6">
    <citation type="journal article" date="2004" name="Genome Res.">
        <title>The status, quality, and expansion of the NIH full-length cDNA project: the Mammalian Gene Collection (MGC).</title>
        <authorList>
            <consortium name="The MGC Project Team"/>
        </authorList>
    </citation>
    <scope>NUCLEOTIDE SEQUENCE [LARGE SCALE MRNA] (ISOFORM 5)</scope>
    <source>
        <tissue>Brain</tissue>
    </source>
</reference>
<reference evidence="15" key="7">
    <citation type="submission" date="2009-12" db="PDB data bank">
        <title>Crystal structure of the dynamin 3 GTPase domain bound with GDP.</title>
        <authorList>
            <consortium name="Structural genomics consortium (SGC)"/>
        </authorList>
    </citation>
    <scope>X-RAY CRYSTALLOGRAPHY (2.27 ANGSTROMS) OF 6-306 IN COMPLEX WITH GTP ANALOG</scope>
</reference>
<organism>
    <name type="scientific">Homo sapiens</name>
    <name type="common">Human</name>
    <dbReference type="NCBI Taxonomy" id="9606"/>
    <lineage>
        <taxon>Eukaryota</taxon>
        <taxon>Metazoa</taxon>
        <taxon>Chordata</taxon>
        <taxon>Craniata</taxon>
        <taxon>Vertebrata</taxon>
        <taxon>Euteleostomi</taxon>
        <taxon>Mammalia</taxon>
        <taxon>Eutheria</taxon>
        <taxon>Euarchontoglires</taxon>
        <taxon>Primates</taxon>
        <taxon>Haplorrhini</taxon>
        <taxon>Catarrhini</taxon>
        <taxon>Hominidae</taxon>
        <taxon>Homo</taxon>
    </lineage>
</organism>
<protein>
    <recommendedName>
        <fullName>Dynamin-3</fullName>
        <ecNumber>3.6.5.5</ecNumber>
    </recommendedName>
    <alternativeName>
        <fullName>Dynamin, testicular</fullName>
    </alternativeName>
    <alternativeName>
        <fullName>T-dynamin</fullName>
    </alternativeName>
</protein>
<proteinExistence type="evidence at protein level"/>
<keyword id="KW-0002">3D-structure</keyword>
<keyword id="KW-0007">Acetylation</keyword>
<keyword id="KW-0025">Alternative splicing</keyword>
<keyword id="KW-0963">Cytoplasm</keyword>
<keyword id="KW-0206">Cytoskeleton</keyword>
<keyword id="KW-0254">Endocytosis</keyword>
<keyword id="KW-0342">GTP-binding</keyword>
<keyword id="KW-0378">Hydrolase</keyword>
<keyword id="KW-0493">Microtubule</keyword>
<keyword id="KW-0505">Motor protein</keyword>
<keyword id="KW-0547">Nucleotide-binding</keyword>
<keyword id="KW-0597">Phosphoprotein</keyword>
<keyword id="KW-1267">Proteomics identification</keyword>
<keyword id="KW-1185">Reference proteome</keyword>
<accession>Q9UQ16</accession>
<accession>A9Z1Y1</accession>
<accession>O14982</accession>
<accession>O95555</accession>
<accession>Q1MTM8</accession>
<accession>Q5W129</accession>
<accession>Q6P2G1</accession>
<accession>Q9H0P3</accession>
<accession>Q9H548</accession>
<accession>Q9NQ68</accession>
<accession>Q9NQN6</accession>
<sequence>MGNREMEELIPLVNRLQDAFSALGQSCLLELPQIAVVGGQSAGKSSVLENFVGRDFLPRGSGIVTRRPLVLQLVTSKAEYAEFLHCKGKKFTDFDEVRLEIEAETDRVTGMNKGISSIPINLRVYSPHVLNLTLIDLPGITKVPVGDQPPDIEYQIREMIMQFITRENCLILAVTPANTDLANSDALKLAKEVDPQGLRTIGVITKLDLMDEGTDARDVLENKLLPLRRGYVGVVNRSQKDIDGKKDIKAAMLAERKFFLSHPAYRHIADRMGTPHLQKVLNQQLTNHIRDTLPNFRNKLQGQLLSIEHEVEAYKNFKPEDPTRKTKALLQMVQQFAVDFEKRIEGSGDQVDTLELSGGAKINRIFHERFPFEIVKMEFNEKELRREISYAIKNIHGIRTGLFTPDMAFEAIVKKQIVKLKGPSLKSVDLVIQELINTVKKCTKKLANFPRLCEETERIVANHIREREGKTKDQVLLLIDIQVSYINTNHEDFIGFANAQQRSSQVHKKTTVGNQGTNLPPSRQIVIRKGWLTISNIGIMKGGSKGYWFVLTAESLSWYKDDEEKEKKYMLPLDNLKVRDVEKSFMSSKHIFALFNTEQRNVYKDYRFLELACDSQEDVDSWKASLLRAGVYPDKSVAENDENGQAENFSMDPQLERQVETIRNLVDSYMSIINKCIRDLIPKTIMHLMINNVKDFINSELLAQLYSSEDQNTLMEESAEQAQRRDEMLRMYQALKEALGIIGDISTATVSTPAPPPVDDSWIQHSRRSPPPSPTTQRRPTLSAPLARPTSGRGPAPAIPSPGPHSGAPPVPFRPGPLPPFPSSSDSFGAPPQVPSRPTRAPPSVPSRRPPPSPTRPTIIRPLESSLLD</sequence>
<gene>
    <name type="primary">DNM3</name>
    <name type="synonym">KIAA0820</name>
</gene>
<evidence type="ECO:0000250" key="1"/>
<evidence type="ECO:0000250" key="2">
    <source>
        <dbReference type="UniProtKB" id="P39052"/>
    </source>
</evidence>
<evidence type="ECO:0000250" key="3">
    <source>
        <dbReference type="UniProtKB" id="P39054"/>
    </source>
</evidence>
<evidence type="ECO:0000250" key="4">
    <source>
        <dbReference type="UniProtKB" id="P50570"/>
    </source>
</evidence>
<evidence type="ECO:0000250" key="5">
    <source>
        <dbReference type="UniProtKB" id="Q08877"/>
    </source>
</evidence>
<evidence type="ECO:0000255" key="6">
    <source>
        <dbReference type="PROSITE-ProRule" id="PRU00145"/>
    </source>
</evidence>
<evidence type="ECO:0000255" key="7">
    <source>
        <dbReference type="PROSITE-ProRule" id="PRU00720"/>
    </source>
</evidence>
<evidence type="ECO:0000255" key="8">
    <source>
        <dbReference type="PROSITE-ProRule" id="PRU01055"/>
    </source>
</evidence>
<evidence type="ECO:0000256" key="9">
    <source>
        <dbReference type="SAM" id="MobiDB-lite"/>
    </source>
</evidence>
<evidence type="ECO:0000303" key="10">
    <source>
    </source>
</evidence>
<evidence type="ECO:0000303" key="11">
    <source>
    </source>
</evidence>
<evidence type="ECO:0000303" key="12">
    <source>
    </source>
</evidence>
<evidence type="ECO:0000305" key="13"/>
<evidence type="ECO:0000305" key="14">
    <source ref="7"/>
</evidence>
<evidence type="ECO:0007744" key="15">
    <source>
        <dbReference type="PDB" id="3L43"/>
    </source>
</evidence>
<evidence type="ECO:0007829" key="16">
    <source>
        <dbReference type="PDB" id="3L43"/>
    </source>
</evidence>
<name>DYN3_HUMAN</name>
<dbReference type="EC" id="3.6.5.5"/>
<dbReference type="EMBL" id="AB020627">
    <property type="protein sequence ID" value="BAA74843.2"/>
    <property type="status" value="ALT_INIT"/>
    <property type="molecule type" value="mRNA"/>
</dbReference>
<dbReference type="EMBL" id="AL136712">
    <property type="protein sequence ID" value="CAB66647.1"/>
    <property type="molecule type" value="mRNA"/>
</dbReference>
<dbReference type="EMBL" id="AL031864">
    <property type="status" value="NOT_ANNOTATED_CDS"/>
    <property type="molecule type" value="Genomic_DNA"/>
</dbReference>
<dbReference type="EMBL" id="AL121984">
    <property type="status" value="NOT_ANNOTATED_CDS"/>
    <property type="molecule type" value="Genomic_DNA"/>
</dbReference>
<dbReference type="EMBL" id="AL133514">
    <property type="status" value="NOT_ANNOTATED_CDS"/>
    <property type="molecule type" value="Genomic_DNA"/>
</dbReference>
<dbReference type="EMBL" id="AL137157">
    <property type="status" value="NOT_ANNOTATED_CDS"/>
    <property type="molecule type" value="Genomic_DNA"/>
</dbReference>
<dbReference type="EMBL" id="AL445990">
    <property type="status" value="NOT_ANNOTATED_CDS"/>
    <property type="molecule type" value="Genomic_DNA"/>
</dbReference>
<dbReference type="EMBL" id="AL512843">
    <property type="status" value="NOT_ANNOTATED_CDS"/>
    <property type="molecule type" value="Genomic_DNA"/>
</dbReference>
<dbReference type="EMBL" id="Z97195">
    <property type="status" value="NOT_ANNOTATED_CDS"/>
    <property type="molecule type" value="Genomic_DNA"/>
</dbReference>
<dbReference type="EMBL" id="CH471067">
    <property type="protein sequence ID" value="EAW90918.1"/>
    <property type="molecule type" value="Genomic_DNA"/>
</dbReference>
<dbReference type="EMBL" id="BC064546">
    <property type="protein sequence ID" value="AAH64546.1"/>
    <property type="molecule type" value="mRNA"/>
</dbReference>
<dbReference type="CCDS" id="CCDS44276.1">
    <molecule id="Q9UQ16-2"/>
</dbReference>
<dbReference type="CCDS" id="CCDS53431.1">
    <molecule id="Q9UQ16-3"/>
</dbReference>
<dbReference type="CCDS" id="CCDS60356.1">
    <molecule id="Q9UQ16-5"/>
</dbReference>
<dbReference type="CCDS" id="CCDS86032.1">
    <molecule id="Q9UQ16-1"/>
</dbReference>
<dbReference type="RefSeq" id="NP_001129599.1">
    <molecule id="Q9UQ16-2"/>
    <property type="nucleotide sequence ID" value="NM_001136127.3"/>
</dbReference>
<dbReference type="RefSeq" id="NP_001265181.1">
    <molecule id="Q9UQ16-5"/>
    <property type="nucleotide sequence ID" value="NM_001278252.2"/>
</dbReference>
<dbReference type="RefSeq" id="NP_001337133.1">
    <molecule id="Q9UQ16-1"/>
    <property type="nucleotide sequence ID" value="NM_001350204.2"/>
</dbReference>
<dbReference type="RefSeq" id="NP_056384.2">
    <molecule id="Q9UQ16-3"/>
    <property type="nucleotide sequence ID" value="NM_015569.4"/>
</dbReference>
<dbReference type="RefSeq" id="XP_005245136.1">
    <molecule id="Q9UQ16-4"/>
    <property type="nucleotide sequence ID" value="XM_005245079.2"/>
</dbReference>
<dbReference type="RefSeq" id="XP_005245137.1">
    <property type="nucleotide sequence ID" value="XM_005245080.1"/>
</dbReference>
<dbReference type="RefSeq" id="XP_054191860.1">
    <molecule id="Q9UQ16-4"/>
    <property type="nucleotide sequence ID" value="XM_054335885.1"/>
</dbReference>
<dbReference type="PDB" id="3L43">
    <property type="method" value="X-ray"/>
    <property type="resolution" value="2.27 A"/>
    <property type="chains" value="A/B/C/D=6-306"/>
</dbReference>
<dbReference type="PDB" id="5A3F">
    <property type="method" value="X-ray"/>
    <property type="resolution" value="3.70 A"/>
    <property type="chains" value="A/B/C/D=1-764"/>
</dbReference>
<dbReference type="PDBsum" id="3L43"/>
<dbReference type="PDBsum" id="5A3F"/>
<dbReference type="SMR" id="Q9UQ16"/>
<dbReference type="BioGRID" id="117515">
    <property type="interactions" value="110"/>
</dbReference>
<dbReference type="DIP" id="DIP-36244N"/>
<dbReference type="FunCoup" id="Q9UQ16">
    <property type="interactions" value="1506"/>
</dbReference>
<dbReference type="IntAct" id="Q9UQ16">
    <property type="interactions" value="73"/>
</dbReference>
<dbReference type="MINT" id="Q9UQ16"/>
<dbReference type="STRING" id="9606.ENSP00000347457"/>
<dbReference type="GlyGen" id="Q9UQ16">
    <property type="glycosylation" value="2 sites"/>
</dbReference>
<dbReference type="iPTMnet" id="Q9UQ16"/>
<dbReference type="PhosphoSitePlus" id="Q9UQ16"/>
<dbReference type="SwissPalm" id="Q9UQ16"/>
<dbReference type="BioMuta" id="DNM3"/>
<dbReference type="DMDM" id="190358934"/>
<dbReference type="jPOST" id="Q9UQ16"/>
<dbReference type="MassIVE" id="Q9UQ16"/>
<dbReference type="PaxDb" id="9606-ENSP00000356705"/>
<dbReference type="PeptideAtlas" id="Q9UQ16"/>
<dbReference type="ProteomicsDB" id="66900"/>
<dbReference type="ProteomicsDB" id="85492">
    <molecule id="Q9UQ16-1"/>
</dbReference>
<dbReference type="ProteomicsDB" id="85493">
    <molecule id="Q9UQ16-2"/>
</dbReference>
<dbReference type="ProteomicsDB" id="85494">
    <molecule id="Q9UQ16-3"/>
</dbReference>
<dbReference type="ProteomicsDB" id="85495">
    <molecule id="Q9UQ16-4"/>
</dbReference>
<dbReference type="Pumba" id="Q9UQ16"/>
<dbReference type="Antibodypedia" id="34382">
    <property type="antibodies" value="218 antibodies from 32 providers"/>
</dbReference>
<dbReference type="DNASU" id="26052"/>
<dbReference type="Ensembl" id="ENST00000355305.9">
    <molecule id="Q9UQ16-1"/>
    <property type="protein sequence ID" value="ENSP00000347457.5"/>
    <property type="gene ID" value="ENSG00000197959.15"/>
</dbReference>
<dbReference type="Ensembl" id="ENST00000367731.5">
    <molecule id="Q9UQ16-2"/>
    <property type="protein sequence ID" value="ENSP00000356705.1"/>
    <property type="gene ID" value="ENSG00000197959.15"/>
</dbReference>
<dbReference type="Ensembl" id="ENST00000367733.6">
    <molecule id="Q9UQ16-5"/>
    <property type="protein sequence ID" value="ENSP00000356707.2"/>
    <property type="gene ID" value="ENSG00000197959.15"/>
</dbReference>
<dbReference type="Ensembl" id="ENST00000627582.3">
    <molecule id="Q9UQ16-3"/>
    <property type="protein sequence ID" value="ENSP00000486701.1"/>
    <property type="gene ID" value="ENSG00000197959.15"/>
</dbReference>
<dbReference type="GeneID" id="26052"/>
<dbReference type="KEGG" id="hsa:26052"/>
<dbReference type="MANE-Select" id="ENST00000627582.3">
    <molecule id="Q9UQ16-3"/>
    <property type="protein sequence ID" value="ENSP00000486701.1"/>
    <property type="RefSeq nucleotide sequence ID" value="NM_015569.5"/>
    <property type="RefSeq protein sequence ID" value="NP_056384.2"/>
</dbReference>
<dbReference type="UCSC" id="uc001gid.6">
    <molecule id="Q9UQ16-1"/>
    <property type="organism name" value="human"/>
</dbReference>
<dbReference type="AGR" id="HGNC:29125"/>
<dbReference type="CTD" id="26052"/>
<dbReference type="DisGeNET" id="26052"/>
<dbReference type="GeneCards" id="DNM3"/>
<dbReference type="HGNC" id="HGNC:29125">
    <property type="gene designation" value="DNM3"/>
</dbReference>
<dbReference type="HPA" id="ENSG00000197959">
    <property type="expression patterns" value="Tissue enhanced (brain)"/>
</dbReference>
<dbReference type="MalaCards" id="DNM3"/>
<dbReference type="MIM" id="611445">
    <property type="type" value="gene"/>
</dbReference>
<dbReference type="neXtProt" id="NX_Q9UQ16"/>
<dbReference type="OpenTargets" id="ENSG00000197959"/>
<dbReference type="PharmGKB" id="PA134954683"/>
<dbReference type="VEuPathDB" id="HostDB:ENSG00000197959"/>
<dbReference type="eggNOG" id="KOG0446">
    <property type="taxonomic scope" value="Eukaryota"/>
</dbReference>
<dbReference type="GeneTree" id="ENSGT00940000158056"/>
<dbReference type="HOGENOM" id="CLU_008964_5_2_1"/>
<dbReference type="InParanoid" id="Q9UQ16"/>
<dbReference type="OMA" id="XVLLLID"/>
<dbReference type="OrthoDB" id="5061070at2759"/>
<dbReference type="PAN-GO" id="Q9UQ16">
    <property type="GO annotations" value="8 GO annotations based on evolutionary models"/>
</dbReference>
<dbReference type="PhylomeDB" id="Q9UQ16"/>
<dbReference type="TreeFam" id="TF300362"/>
<dbReference type="BRENDA" id="3.6.5.5">
    <property type="organism ID" value="2681"/>
</dbReference>
<dbReference type="PathwayCommons" id="Q9UQ16"/>
<dbReference type="Reactome" id="R-HSA-166016">
    <property type="pathway name" value="Toll Like Receptor 4 (TLR4) Cascade"/>
</dbReference>
<dbReference type="Reactome" id="R-HSA-177504">
    <property type="pathway name" value="Retrograde neurotrophin signalling"/>
</dbReference>
<dbReference type="Reactome" id="R-HSA-2132295">
    <property type="pathway name" value="MHC class II antigen presentation"/>
</dbReference>
<dbReference type="Reactome" id="R-HSA-437239">
    <property type="pathway name" value="Recycling pathway of L1"/>
</dbReference>
<dbReference type="Reactome" id="R-HSA-8856828">
    <property type="pathway name" value="Clathrin-mediated endocytosis"/>
</dbReference>
<dbReference type="SignaLink" id="Q9UQ16"/>
<dbReference type="BioGRID-ORCS" id="26052">
    <property type="hits" value="8 hits in 1148 CRISPR screens"/>
</dbReference>
<dbReference type="CD-CODE" id="FB4E32DD">
    <property type="entry name" value="Presynaptic clusters and postsynaptic densities"/>
</dbReference>
<dbReference type="ChiTaRS" id="DNM3">
    <property type="organism name" value="human"/>
</dbReference>
<dbReference type="EvolutionaryTrace" id="Q9UQ16"/>
<dbReference type="GeneWiki" id="DNM3"/>
<dbReference type="GenomeRNAi" id="26052"/>
<dbReference type="Pharos" id="Q9UQ16">
    <property type="development level" value="Tbio"/>
</dbReference>
<dbReference type="PRO" id="PR:Q9UQ16"/>
<dbReference type="Proteomes" id="UP000005640">
    <property type="component" value="Chromosome 1"/>
</dbReference>
<dbReference type="RNAct" id="Q9UQ16">
    <property type="molecule type" value="protein"/>
</dbReference>
<dbReference type="Bgee" id="ENSG00000197959">
    <property type="expression patterns" value="Expressed in lateral nuclear group of thalamus and 142 other cell types or tissues"/>
</dbReference>
<dbReference type="ExpressionAtlas" id="Q9UQ16">
    <property type="expression patterns" value="baseline and differential"/>
</dbReference>
<dbReference type="GO" id="GO:0005737">
    <property type="term" value="C:cytoplasm"/>
    <property type="evidence" value="ECO:0000318"/>
    <property type="project" value="GO_Central"/>
</dbReference>
<dbReference type="GO" id="GO:0043197">
    <property type="term" value="C:dendritic spine"/>
    <property type="evidence" value="ECO:0000250"/>
    <property type="project" value="UniProtKB"/>
</dbReference>
<dbReference type="GO" id="GO:0070062">
    <property type="term" value="C:extracellular exosome"/>
    <property type="evidence" value="ECO:0007005"/>
    <property type="project" value="UniProtKB"/>
</dbReference>
<dbReference type="GO" id="GO:0005874">
    <property type="term" value="C:microtubule"/>
    <property type="evidence" value="ECO:0000318"/>
    <property type="project" value="GO_Central"/>
</dbReference>
<dbReference type="GO" id="GO:0048471">
    <property type="term" value="C:perinuclear region of cytoplasm"/>
    <property type="evidence" value="ECO:0000250"/>
    <property type="project" value="UniProtKB"/>
</dbReference>
<dbReference type="GO" id="GO:0005886">
    <property type="term" value="C:plasma membrane"/>
    <property type="evidence" value="ECO:0000318"/>
    <property type="project" value="GO_Central"/>
</dbReference>
<dbReference type="GO" id="GO:0014069">
    <property type="term" value="C:postsynaptic density"/>
    <property type="evidence" value="ECO:0000250"/>
    <property type="project" value="UniProtKB"/>
</dbReference>
<dbReference type="GO" id="GO:0098793">
    <property type="term" value="C:presynapse"/>
    <property type="evidence" value="ECO:0007669"/>
    <property type="project" value="GOC"/>
</dbReference>
<dbReference type="GO" id="GO:0045202">
    <property type="term" value="C:synapse"/>
    <property type="evidence" value="ECO:0000318"/>
    <property type="project" value="GO_Central"/>
</dbReference>
<dbReference type="GO" id="GO:0005525">
    <property type="term" value="F:GTP binding"/>
    <property type="evidence" value="ECO:0007669"/>
    <property type="project" value="UniProtKB-KW"/>
</dbReference>
<dbReference type="GO" id="GO:0003924">
    <property type="term" value="F:GTPase activity"/>
    <property type="evidence" value="ECO:0000250"/>
    <property type="project" value="UniProtKB"/>
</dbReference>
<dbReference type="GO" id="GO:0042802">
    <property type="term" value="F:identical protein binding"/>
    <property type="evidence" value="ECO:0000353"/>
    <property type="project" value="IntAct"/>
</dbReference>
<dbReference type="GO" id="GO:0008017">
    <property type="term" value="F:microtubule binding"/>
    <property type="evidence" value="ECO:0000318"/>
    <property type="project" value="GO_Central"/>
</dbReference>
<dbReference type="GO" id="GO:0006897">
    <property type="term" value="P:endocytosis"/>
    <property type="evidence" value="ECO:0000250"/>
    <property type="project" value="UniProtKB"/>
</dbReference>
<dbReference type="GO" id="GO:0046847">
    <property type="term" value="P:filopodium assembly"/>
    <property type="evidence" value="ECO:0000250"/>
    <property type="project" value="UniProtKB"/>
</dbReference>
<dbReference type="GO" id="GO:0031623">
    <property type="term" value="P:receptor internalization"/>
    <property type="evidence" value="ECO:0000318"/>
    <property type="project" value="GO_Central"/>
</dbReference>
<dbReference type="GO" id="GO:0007416">
    <property type="term" value="P:synapse assembly"/>
    <property type="evidence" value="ECO:0000250"/>
    <property type="project" value="UniProtKB"/>
</dbReference>
<dbReference type="GO" id="GO:0016185">
    <property type="term" value="P:synaptic vesicle budding from presynaptic endocytic zone membrane"/>
    <property type="evidence" value="ECO:0000318"/>
    <property type="project" value="GO_Central"/>
</dbReference>
<dbReference type="CDD" id="cd08771">
    <property type="entry name" value="DLP_1"/>
    <property type="match status" value="1"/>
</dbReference>
<dbReference type="CDD" id="cd01256">
    <property type="entry name" value="PH_dynamin"/>
    <property type="match status" value="1"/>
</dbReference>
<dbReference type="FunFam" id="1.20.120.1240:FF:000019">
    <property type="entry name" value="Dynamin 2"/>
    <property type="match status" value="1"/>
</dbReference>
<dbReference type="FunFam" id="1.20.120.1240:FF:000014">
    <property type="entry name" value="Dynamin 2b"/>
    <property type="match status" value="1"/>
</dbReference>
<dbReference type="FunFam" id="3.40.50.300:FF:000045">
    <property type="entry name" value="dynamin-1 isoform X2"/>
    <property type="match status" value="1"/>
</dbReference>
<dbReference type="FunFam" id="2.30.29.30:FF:000341">
    <property type="entry name" value="dynamin-3 isoform X1"/>
    <property type="match status" value="1"/>
</dbReference>
<dbReference type="Gene3D" id="1.20.120.1240">
    <property type="entry name" value="Dynamin, middle domain"/>
    <property type="match status" value="1"/>
</dbReference>
<dbReference type="Gene3D" id="3.40.50.300">
    <property type="entry name" value="P-loop containing nucleotide triphosphate hydrolases"/>
    <property type="match status" value="1"/>
</dbReference>
<dbReference type="Gene3D" id="2.30.29.30">
    <property type="entry name" value="Pleckstrin-homology domain (PH domain)/Phosphotyrosine-binding domain (PTB)"/>
    <property type="match status" value="1"/>
</dbReference>
<dbReference type="InterPro" id="IPR022812">
    <property type="entry name" value="Dynamin"/>
</dbReference>
<dbReference type="InterPro" id="IPR001401">
    <property type="entry name" value="Dynamin_GTPase"/>
</dbReference>
<dbReference type="InterPro" id="IPR019762">
    <property type="entry name" value="Dynamin_GTPase_CS"/>
</dbReference>
<dbReference type="InterPro" id="IPR045063">
    <property type="entry name" value="Dynamin_N"/>
</dbReference>
<dbReference type="InterPro" id="IPR000375">
    <property type="entry name" value="Dynamin_stalk"/>
</dbReference>
<dbReference type="InterPro" id="IPR030381">
    <property type="entry name" value="G_DYNAMIN_dom"/>
</dbReference>
<dbReference type="InterPro" id="IPR003130">
    <property type="entry name" value="GED"/>
</dbReference>
<dbReference type="InterPro" id="IPR020850">
    <property type="entry name" value="GED_dom"/>
</dbReference>
<dbReference type="InterPro" id="IPR027417">
    <property type="entry name" value="P-loop_NTPase"/>
</dbReference>
<dbReference type="InterPro" id="IPR011993">
    <property type="entry name" value="PH-like_dom_sf"/>
</dbReference>
<dbReference type="InterPro" id="IPR001849">
    <property type="entry name" value="PH_domain"/>
</dbReference>
<dbReference type="PANTHER" id="PTHR11566">
    <property type="entry name" value="DYNAMIN"/>
    <property type="match status" value="1"/>
</dbReference>
<dbReference type="PANTHER" id="PTHR11566:SF54">
    <property type="entry name" value="DYNAMIN-3"/>
    <property type="match status" value="1"/>
</dbReference>
<dbReference type="Pfam" id="PF01031">
    <property type="entry name" value="Dynamin_M"/>
    <property type="match status" value="1"/>
</dbReference>
<dbReference type="Pfam" id="PF00350">
    <property type="entry name" value="Dynamin_N"/>
    <property type="match status" value="1"/>
</dbReference>
<dbReference type="Pfam" id="PF02212">
    <property type="entry name" value="GED"/>
    <property type="match status" value="1"/>
</dbReference>
<dbReference type="Pfam" id="PF00169">
    <property type="entry name" value="PH"/>
    <property type="match status" value="1"/>
</dbReference>
<dbReference type="PRINTS" id="PR00195">
    <property type="entry name" value="DYNAMIN"/>
</dbReference>
<dbReference type="SMART" id="SM00053">
    <property type="entry name" value="DYNc"/>
    <property type="match status" value="1"/>
</dbReference>
<dbReference type="SMART" id="SM00302">
    <property type="entry name" value="GED"/>
    <property type="match status" value="1"/>
</dbReference>
<dbReference type="SMART" id="SM00233">
    <property type="entry name" value="PH"/>
    <property type="match status" value="1"/>
</dbReference>
<dbReference type="SUPFAM" id="SSF52540">
    <property type="entry name" value="P-loop containing nucleoside triphosphate hydrolases"/>
    <property type="match status" value="1"/>
</dbReference>
<dbReference type="SUPFAM" id="SSF50729">
    <property type="entry name" value="PH domain-like"/>
    <property type="match status" value="1"/>
</dbReference>
<dbReference type="PROSITE" id="PS00410">
    <property type="entry name" value="G_DYNAMIN_1"/>
    <property type="match status" value="1"/>
</dbReference>
<dbReference type="PROSITE" id="PS51718">
    <property type="entry name" value="G_DYNAMIN_2"/>
    <property type="match status" value="1"/>
</dbReference>
<dbReference type="PROSITE" id="PS51388">
    <property type="entry name" value="GED"/>
    <property type="match status" value="1"/>
</dbReference>
<dbReference type="PROSITE" id="PS50003">
    <property type="entry name" value="PH_DOMAIN"/>
    <property type="match status" value="1"/>
</dbReference>
<comment type="function">
    <text evidence="1">Microtubule-associated force-producing protein involved in producing microtubule bundles and able to bind and hydrolyze GTP. Most probably involved in vesicular trafficking processes, in particular endocytosis (By similarity).</text>
</comment>
<comment type="catalytic activity">
    <reaction>
        <text>GTP + H2O = GDP + phosphate + H(+)</text>
        <dbReference type="Rhea" id="RHEA:19669"/>
        <dbReference type="ChEBI" id="CHEBI:15377"/>
        <dbReference type="ChEBI" id="CHEBI:15378"/>
        <dbReference type="ChEBI" id="CHEBI:37565"/>
        <dbReference type="ChEBI" id="CHEBI:43474"/>
        <dbReference type="ChEBI" id="CHEBI:58189"/>
        <dbReference type="EC" id="3.6.5.5"/>
    </reaction>
</comment>
<comment type="interaction">
    <interactant intactId="EBI-3959311">
        <id>Q9UQ16-2</id>
    </interactant>
    <interactant intactId="EBI-3959311">
        <id>Q9UQ16-2</id>
        <label>DNM3</label>
    </interactant>
    <organismsDiffer>false</organismsDiffer>
    <experiments>4</experiments>
</comment>
<comment type="subcellular location">
    <subcellularLocation>
        <location evidence="13">Cytoplasm</location>
    </subcellularLocation>
    <subcellularLocation>
        <location evidence="13">Cytoplasm</location>
        <location evidence="13">Cytoskeleton</location>
    </subcellularLocation>
    <text evidence="13">Microtubule-associated.</text>
</comment>
<comment type="alternative products">
    <event type="alternative splicing"/>
    <isoform>
        <id>Q9UQ16-1</id>
        <name>1</name>
        <sequence type="displayed"/>
    </isoform>
    <isoform>
        <id>Q9UQ16-2</id>
        <name>2</name>
        <sequence type="described" ref="VSP_034053"/>
    </isoform>
    <isoform>
        <id>Q9UQ16-3</id>
        <name>3</name>
        <sequence type="described" ref="VSP_034053 VSP_034054"/>
    </isoform>
    <isoform>
        <id>Q9UQ16-4</id>
        <name>4</name>
        <sequence type="described" ref="VSP_034054"/>
    </isoform>
    <isoform>
        <id>Q9UQ16-5</id>
        <name>5</name>
        <sequence type="described" ref="VSP_034053 VSP_054546 VSP_054547"/>
    </isoform>
</comment>
<comment type="similarity">
    <text evidence="8">Belongs to the TRAFAC class dynamin-like GTPase superfamily. Dynamin/Fzo/YdjA family.</text>
</comment>
<comment type="sequence caution" evidence="13">
    <conflict type="erroneous initiation">
        <sequence resource="EMBL-CDS" id="BAA74843"/>
    </conflict>
</comment>